<evidence type="ECO:0000250" key="1">
    <source>
        <dbReference type="UniProtKB" id="P0A1P6"/>
    </source>
</evidence>
<evidence type="ECO:0000250" key="2">
    <source>
        <dbReference type="UniProtKB" id="P12425"/>
    </source>
</evidence>
<evidence type="ECO:0000250" key="3">
    <source>
        <dbReference type="UniProtKB" id="P16580"/>
    </source>
</evidence>
<evidence type="ECO:0000250" key="4">
    <source>
        <dbReference type="UniProtKB" id="P9WN39"/>
    </source>
</evidence>
<evidence type="ECO:0000250" key="5">
    <source>
        <dbReference type="UniProtKB" id="Q02154"/>
    </source>
</evidence>
<evidence type="ECO:0000255" key="6">
    <source>
        <dbReference type="PROSITE-ProRule" id="PRU01330"/>
    </source>
</evidence>
<evidence type="ECO:0000255" key="7">
    <source>
        <dbReference type="PROSITE-ProRule" id="PRU01331"/>
    </source>
</evidence>
<evidence type="ECO:0000303" key="8">
    <source>
    </source>
</evidence>
<evidence type="ECO:0000305" key="9"/>
<evidence type="ECO:0000305" key="10">
    <source>
    </source>
</evidence>
<comment type="function">
    <text evidence="5">Catalyzes the ATP-dependent biosynthesis of glutamine from glutamate and ammonia.</text>
</comment>
<comment type="catalytic activity">
    <reaction evidence="3">
        <text>L-glutamate + NH4(+) + ATP = L-glutamine + ADP + phosphate + H(+)</text>
        <dbReference type="Rhea" id="RHEA:16169"/>
        <dbReference type="ChEBI" id="CHEBI:15378"/>
        <dbReference type="ChEBI" id="CHEBI:28938"/>
        <dbReference type="ChEBI" id="CHEBI:29985"/>
        <dbReference type="ChEBI" id="CHEBI:30616"/>
        <dbReference type="ChEBI" id="CHEBI:43474"/>
        <dbReference type="ChEBI" id="CHEBI:58359"/>
        <dbReference type="ChEBI" id="CHEBI:456216"/>
        <dbReference type="EC" id="6.3.1.2"/>
    </reaction>
</comment>
<comment type="cofactor">
    <cofactor evidence="3">
        <name>Mg(2+)</name>
        <dbReference type="ChEBI" id="CHEBI:18420"/>
    </cofactor>
</comment>
<comment type="subunit">
    <text evidence="5">Homooctamer and homotetramer.</text>
</comment>
<comment type="subcellular location">
    <subcellularLocation>
        <location evidence="3">Cytoplasm</location>
    </subcellularLocation>
</comment>
<comment type="induction">
    <text evidence="10">By nitrogen starvation.</text>
</comment>
<comment type="miscellaneous">
    <text evidence="10">Two forms of glutamine synthetase (GSI and GSII) can be found in this nitrogen fixing bacteria, GSI is a typical prokaryotic glutamine synthetase whereas GSII is similar to the eukaryotic enzyme.</text>
</comment>
<comment type="similarity">
    <text evidence="9">Belongs to the glutamine synthetase family.</text>
</comment>
<keyword id="KW-0067">ATP-binding</keyword>
<keyword id="KW-0963">Cytoplasm</keyword>
<keyword id="KW-0436">Ligase</keyword>
<keyword id="KW-0460">Magnesium</keyword>
<keyword id="KW-0479">Metal-binding</keyword>
<keyword id="KW-0535">Nitrogen fixation</keyword>
<keyword id="KW-0547">Nucleotide-binding</keyword>
<keyword id="KW-0346">Stress response</keyword>
<protein>
    <recommendedName>
        <fullName evidence="8">Glutamine synthetase</fullName>
        <shortName evidence="8">GS</shortName>
        <ecNumber evidence="3">6.3.1.2</ecNumber>
    </recommendedName>
    <alternativeName>
        <fullName evidence="9">Glutamate--ammonia ligase</fullName>
    </alternativeName>
    <alternativeName>
        <fullName evidence="8">Glutamine synthetase II</fullName>
        <shortName evidence="8">GSII</shortName>
    </alternativeName>
</protein>
<proteinExistence type="evidence at transcript level"/>
<reference key="1">
    <citation type="journal article" date="1990" name="J. Bacteriol.">
        <title>Molecular cloning, sequencing, and expression of the glutamine synthetase II (glnII) gene from the actinomycete root nodule symbiont Frankia sp. strain CpI1.</title>
        <authorList>
            <person name="Rochefort D.A."/>
            <person name="Benson D.R."/>
        </authorList>
    </citation>
    <scope>NUCLEOTIDE SEQUENCE [GENOMIC DNA]</scope>
    <scope>INDUCTION</scope>
    <source>
        <strain>CpI1</strain>
    </source>
</reference>
<reference key="2">
    <citation type="journal article" date="1993" name="J. Bacteriol.">
        <title>Close linkage of genes encoding glutamine synthetases I and II in Frankia alni CpI1.</title>
        <authorList>
            <person name="Hosted T.J."/>
            <person name="Rochefort D.A."/>
            <person name="Benson D.R."/>
        </authorList>
    </citation>
    <scope>NUCLEOTIDE SEQUENCE [GENOMIC DNA] OF 1-9</scope>
    <source>
        <strain>CpI1</strain>
    </source>
</reference>
<accession>P20805</accession>
<name>GLNA2_FRAAL</name>
<feature type="chain" id="PRO_0000153222" description="Glutamine synthetase">
    <location>
        <begin position="1"/>
        <end position="352"/>
    </location>
</feature>
<feature type="domain" description="GS beta-grasp" evidence="6">
    <location>
        <begin position="3"/>
        <end position="82"/>
    </location>
</feature>
<feature type="domain" description="GS catalytic" evidence="7">
    <location>
        <begin position="87"/>
        <end position="352"/>
    </location>
</feature>
<feature type="binding site" evidence="2">
    <location>
        <position position="108"/>
    </location>
    <ligand>
        <name>Mg(2+)</name>
        <dbReference type="ChEBI" id="CHEBI:18420"/>
    </ligand>
</feature>
<feature type="binding site" evidence="2">
    <location>
        <position position="110"/>
    </location>
    <ligand>
        <name>Mg(2+)</name>
        <dbReference type="ChEBI" id="CHEBI:18420"/>
    </ligand>
</feature>
<feature type="binding site" evidence="4">
    <location>
        <position position="164"/>
    </location>
    <ligand>
        <name>ATP</name>
        <dbReference type="ChEBI" id="CHEBI:30616"/>
    </ligand>
</feature>
<feature type="binding site" evidence="2">
    <location>
        <position position="169"/>
    </location>
    <ligand>
        <name>Mg(2+)</name>
        <dbReference type="ChEBI" id="CHEBI:18420"/>
    </ligand>
</feature>
<feature type="binding site" evidence="2">
    <location>
        <position position="176"/>
    </location>
    <ligand>
        <name>Mg(2+)</name>
        <dbReference type="ChEBI" id="CHEBI:18420"/>
    </ligand>
</feature>
<feature type="binding site" evidence="1">
    <location>
        <position position="272"/>
    </location>
    <ligand>
        <name>L-glutamate</name>
        <dbReference type="ChEBI" id="CHEBI:29985"/>
    </ligand>
</feature>
<gene>
    <name evidence="8" type="primary">glnII</name>
</gene>
<organism>
    <name type="scientific">Frankia alni</name>
    <dbReference type="NCBI Taxonomy" id="1859"/>
    <lineage>
        <taxon>Bacteria</taxon>
        <taxon>Bacillati</taxon>
        <taxon>Actinomycetota</taxon>
        <taxon>Actinomycetes</taxon>
        <taxon>Frankiales</taxon>
        <taxon>Frankiaceae</taxon>
        <taxon>Frankia</taxon>
    </lineage>
</organism>
<sequence>MSYQAEYIWIDGTEPEPLMRSKTRIIKDGKEPEIWGFDGSSTNQAPGSNSDCVLRPVFETPDPIRGGDNRLVLCEVQLTDFTPPTNTRAAALGVAERYADMSPMFGIEQEYTFFKDGRPYGWPEVGYPAPQGPYYCGVGGSKMPGRQIVERHTQACLDAGLAIEGTNAEVMMGQWEFQIGVLPAPAIGDQIWLGRWLLHRIAEDYGVEVSFAAKPIPGDWNGAGAHTNFSTKQTMEGWDAIVTCCEALGTRVTEHVTHYGKGIEDRLTGKHETAPWNKYSWGASDRGASVRIPWAVEKAKKGWLEDRRPNANMDPYLVTALMIDTCCSALAGDKPTLFVPSQTTPAPAEASV</sequence>
<dbReference type="EC" id="6.3.1.2" evidence="3"/>
<dbReference type="EMBL" id="M58415">
    <property type="protein sequence ID" value="AAA62803.1"/>
    <property type="molecule type" value="Genomic_DNA"/>
</dbReference>
<dbReference type="EMBL" id="L10632">
    <property type="status" value="NOT_ANNOTATED_CDS"/>
    <property type="molecule type" value="Genomic_DNA"/>
</dbReference>
<dbReference type="SMR" id="P20805"/>
<dbReference type="GO" id="GO:0005737">
    <property type="term" value="C:cytoplasm"/>
    <property type="evidence" value="ECO:0007669"/>
    <property type="project" value="UniProtKB-SubCell"/>
</dbReference>
<dbReference type="GO" id="GO:0005524">
    <property type="term" value="F:ATP binding"/>
    <property type="evidence" value="ECO:0007669"/>
    <property type="project" value="UniProtKB-KW"/>
</dbReference>
<dbReference type="GO" id="GO:0004356">
    <property type="term" value="F:glutamine synthetase activity"/>
    <property type="evidence" value="ECO:0007669"/>
    <property type="project" value="UniProtKB-EC"/>
</dbReference>
<dbReference type="GO" id="GO:0046872">
    <property type="term" value="F:metal ion binding"/>
    <property type="evidence" value="ECO:0007669"/>
    <property type="project" value="UniProtKB-KW"/>
</dbReference>
<dbReference type="GO" id="GO:0006542">
    <property type="term" value="P:glutamine biosynthetic process"/>
    <property type="evidence" value="ECO:0007669"/>
    <property type="project" value="InterPro"/>
</dbReference>
<dbReference type="GO" id="GO:0009399">
    <property type="term" value="P:nitrogen fixation"/>
    <property type="evidence" value="ECO:0007669"/>
    <property type="project" value="UniProtKB-KW"/>
</dbReference>
<dbReference type="FunFam" id="3.30.590.10:FF:000011">
    <property type="entry name" value="Glutamine synthetase"/>
    <property type="match status" value="1"/>
</dbReference>
<dbReference type="Gene3D" id="3.10.20.70">
    <property type="entry name" value="Glutamine synthetase, N-terminal domain"/>
    <property type="match status" value="1"/>
</dbReference>
<dbReference type="Gene3D" id="3.30.590.10">
    <property type="entry name" value="Glutamine synthetase/guanido kinase, catalytic domain"/>
    <property type="match status" value="1"/>
</dbReference>
<dbReference type="InterPro" id="IPR048091">
    <property type="entry name" value="Gln_syn_GlnII"/>
</dbReference>
<dbReference type="InterPro" id="IPR008147">
    <property type="entry name" value="Gln_synt_N"/>
</dbReference>
<dbReference type="InterPro" id="IPR036651">
    <property type="entry name" value="Gln_synt_N_sf"/>
</dbReference>
<dbReference type="InterPro" id="IPR014746">
    <property type="entry name" value="Gln_synth/guanido_kin_cat_dom"/>
</dbReference>
<dbReference type="InterPro" id="IPR008146">
    <property type="entry name" value="Gln_synth_cat_dom"/>
</dbReference>
<dbReference type="InterPro" id="IPR027303">
    <property type="entry name" value="Gln_synth_gly_rich_site"/>
</dbReference>
<dbReference type="InterPro" id="IPR027302">
    <property type="entry name" value="Gln_synth_N_conserv_site"/>
</dbReference>
<dbReference type="InterPro" id="IPR050292">
    <property type="entry name" value="Glutamine_Synthetase"/>
</dbReference>
<dbReference type="NCBIfam" id="NF041605">
    <property type="entry name" value="gln_syn_GlnII"/>
    <property type="match status" value="1"/>
</dbReference>
<dbReference type="PANTHER" id="PTHR20852">
    <property type="entry name" value="GLUTAMINE SYNTHETASE"/>
    <property type="match status" value="1"/>
</dbReference>
<dbReference type="PANTHER" id="PTHR20852:SF57">
    <property type="entry name" value="GLUTAMINE SYNTHETASE 2 CYTOPLASMIC"/>
    <property type="match status" value="1"/>
</dbReference>
<dbReference type="Pfam" id="PF00120">
    <property type="entry name" value="Gln-synt_C"/>
    <property type="match status" value="1"/>
</dbReference>
<dbReference type="Pfam" id="PF03951">
    <property type="entry name" value="Gln-synt_N"/>
    <property type="match status" value="1"/>
</dbReference>
<dbReference type="SMART" id="SM01230">
    <property type="entry name" value="Gln-synt_C"/>
    <property type="match status" value="1"/>
</dbReference>
<dbReference type="SUPFAM" id="SSF54368">
    <property type="entry name" value="Glutamine synthetase, N-terminal domain"/>
    <property type="match status" value="1"/>
</dbReference>
<dbReference type="SUPFAM" id="SSF55931">
    <property type="entry name" value="Glutamine synthetase/guanido kinase"/>
    <property type="match status" value="1"/>
</dbReference>
<dbReference type="PROSITE" id="PS00180">
    <property type="entry name" value="GLNA_1"/>
    <property type="match status" value="1"/>
</dbReference>
<dbReference type="PROSITE" id="PS00181">
    <property type="entry name" value="GLNA_ATP"/>
    <property type="match status" value="1"/>
</dbReference>
<dbReference type="PROSITE" id="PS51986">
    <property type="entry name" value="GS_BETA_GRASP"/>
    <property type="match status" value="1"/>
</dbReference>
<dbReference type="PROSITE" id="PS51987">
    <property type="entry name" value="GS_CATALYTIC"/>
    <property type="match status" value="1"/>
</dbReference>